<protein>
    <recommendedName>
        <fullName evidence="1">4-hydroxy-tetrahydrodipicolinate reductase</fullName>
        <shortName evidence="1">HTPA reductase</shortName>
        <ecNumber evidence="1">1.17.1.8</ecNumber>
    </recommendedName>
</protein>
<reference key="1">
    <citation type="submission" date="2007-07" db="EMBL/GenBank/DDBJ databases">
        <title>Genome sequence of Campylobacter curvus 525.92 isolated from human feces.</title>
        <authorList>
            <person name="Fouts D.E."/>
            <person name="Mongodin E.F."/>
            <person name="Puiu D."/>
            <person name="Sebastian Y."/>
            <person name="Miller W.G."/>
            <person name="Mandrell R.E."/>
            <person name="Lastovica A.J."/>
            <person name="Nelson K.E."/>
        </authorList>
    </citation>
    <scope>NUCLEOTIDE SEQUENCE [LARGE SCALE GENOMIC DNA]</scope>
    <source>
        <strain>525.92</strain>
    </source>
</reference>
<organism>
    <name type="scientific">Campylobacter curvus (strain 525.92)</name>
    <dbReference type="NCBI Taxonomy" id="360105"/>
    <lineage>
        <taxon>Bacteria</taxon>
        <taxon>Pseudomonadati</taxon>
        <taxon>Campylobacterota</taxon>
        <taxon>Epsilonproteobacteria</taxon>
        <taxon>Campylobacterales</taxon>
        <taxon>Campylobacteraceae</taxon>
        <taxon>Campylobacter</taxon>
    </lineage>
</organism>
<evidence type="ECO:0000255" key="1">
    <source>
        <dbReference type="HAMAP-Rule" id="MF_00102"/>
    </source>
</evidence>
<evidence type="ECO:0000305" key="2"/>
<comment type="function">
    <text evidence="1">Catalyzes the conversion of 4-hydroxy-tetrahydrodipicolinate (HTPA) to tetrahydrodipicolinate.</text>
</comment>
<comment type="catalytic activity">
    <reaction evidence="1">
        <text>(S)-2,3,4,5-tetrahydrodipicolinate + NAD(+) + H2O = (2S,4S)-4-hydroxy-2,3,4,5-tetrahydrodipicolinate + NADH + H(+)</text>
        <dbReference type="Rhea" id="RHEA:35323"/>
        <dbReference type="ChEBI" id="CHEBI:15377"/>
        <dbReference type="ChEBI" id="CHEBI:15378"/>
        <dbReference type="ChEBI" id="CHEBI:16845"/>
        <dbReference type="ChEBI" id="CHEBI:57540"/>
        <dbReference type="ChEBI" id="CHEBI:57945"/>
        <dbReference type="ChEBI" id="CHEBI:67139"/>
        <dbReference type="EC" id="1.17.1.8"/>
    </reaction>
</comment>
<comment type="catalytic activity">
    <reaction evidence="1">
        <text>(S)-2,3,4,5-tetrahydrodipicolinate + NADP(+) + H2O = (2S,4S)-4-hydroxy-2,3,4,5-tetrahydrodipicolinate + NADPH + H(+)</text>
        <dbReference type="Rhea" id="RHEA:35331"/>
        <dbReference type="ChEBI" id="CHEBI:15377"/>
        <dbReference type="ChEBI" id="CHEBI:15378"/>
        <dbReference type="ChEBI" id="CHEBI:16845"/>
        <dbReference type="ChEBI" id="CHEBI:57783"/>
        <dbReference type="ChEBI" id="CHEBI:58349"/>
        <dbReference type="ChEBI" id="CHEBI:67139"/>
        <dbReference type="EC" id="1.17.1.8"/>
    </reaction>
</comment>
<comment type="pathway">
    <text evidence="1">Amino-acid biosynthesis; L-lysine biosynthesis via DAP pathway; (S)-tetrahydrodipicolinate from L-aspartate: step 4/4.</text>
</comment>
<comment type="subcellular location">
    <subcellularLocation>
        <location evidence="1">Cytoplasm</location>
    </subcellularLocation>
</comment>
<comment type="similarity">
    <text evidence="1">Belongs to the DapB family.</text>
</comment>
<comment type="caution">
    <text evidence="2">Was originally thought to be a dihydrodipicolinate reductase (DHDPR), catalyzing the conversion of dihydrodipicolinate to tetrahydrodipicolinate. However, it was shown in E.coli that the substrate of the enzymatic reaction is not dihydrodipicolinate (DHDP) but in fact (2S,4S)-4-hydroxy-2,3,4,5-tetrahydrodipicolinic acid (HTPA), the product released by the DapA-catalyzed reaction.</text>
</comment>
<sequence length="254" mass="26952">MINIGIHGASGKMGQMIINCLKDSKDAKLTALYTIEPLGSVPEGVIVTDDLNELFANCDVVIDFTIKEGALNLINYARTNPKPLVIGTTGLGDDGTNLLNLAANAMPILYATNMSLGVAVLNRLASLAAKTLAEFDIEIVEQHHRHKKDAPSGTALTLAQHAANARGLNLKDVIVTGRDGLVGARSKDEIAVLAVRGGDVVGRHTIGFYNEGEFIEINHTATSRATFAKGAIKAAVWLSSQKNGLYSIYDCLGL</sequence>
<proteinExistence type="inferred from homology"/>
<keyword id="KW-0028">Amino-acid biosynthesis</keyword>
<keyword id="KW-0963">Cytoplasm</keyword>
<keyword id="KW-0220">Diaminopimelate biosynthesis</keyword>
<keyword id="KW-0457">Lysine biosynthesis</keyword>
<keyword id="KW-0520">NAD</keyword>
<keyword id="KW-0521">NADP</keyword>
<keyword id="KW-0560">Oxidoreductase</keyword>
<keyword id="KW-1185">Reference proteome</keyword>
<accession>A7GWC2</accession>
<dbReference type="EC" id="1.17.1.8" evidence="1"/>
<dbReference type="EMBL" id="CP000767">
    <property type="protein sequence ID" value="EAU01118.1"/>
    <property type="molecule type" value="Genomic_DNA"/>
</dbReference>
<dbReference type="RefSeq" id="WP_011991761.1">
    <property type="nucleotide sequence ID" value="NC_009715.2"/>
</dbReference>
<dbReference type="SMR" id="A7GWC2"/>
<dbReference type="STRING" id="360105.CCV52592_0841"/>
<dbReference type="KEGG" id="ccv:CCV52592_0841"/>
<dbReference type="HOGENOM" id="CLU_047479_2_2_7"/>
<dbReference type="OrthoDB" id="9790352at2"/>
<dbReference type="UniPathway" id="UPA00034">
    <property type="reaction ID" value="UER00018"/>
</dbReference>
<dbReference type="Proteomes" id="UP000006380">
    <property type="component" value="Chromosome"/>
</dbReference>
<dbReference type="GO" id="GO:0005829">
    <property type="term" value="C:cytosol"/>
    <property type="evidence" value="ECO:0007669"/>
    <property type="project" value="TreeGrafter"/>
</dbReference>
<dbReference type="GO" id="GO:0008839">
    <property type="term" value="F:4-hydroxy-tetrahydrodipicolinate reductase"/>
    <property type="evidence" value="ECO:0007669"/>
    <property type="project" value="UniProtKB-EC"/>
</dbReference>
<dbReference type="GO" id="GO:0051287">
    <property type="term" value="F:NAD binding"/>
    <property type="evidence" value="ECO:0007669"/>
    <property type="project" value="UniProtKB-UniRule"/>
</dbReference>
<dbReference type="GO" id="GO:0050661">
    <property type="term" value="F:NADP binding"/>
    <property type="evidence" value="ECO:0007669"/>
    <property type="project" value="UniProtKB-UniRule"/>
</dbReference>
<dbReference type="GO" id="GO:0016726">
    <property type="term" value="F:oxidoreductase activity, acting on CH or CH2 groups, NAD or NADP as acceptor"/>
    <property type="evidence" value="ECO:0007669"/>
    <property type="project" value="UniProtKB-UniRule"/>
</dbReference>
<dbReference type="GO" id="GO:0019877">
    <property type="term" value="P:diaminopimelate biosynthetic process"/>
    <property type="evidence" value="ECO:0007669"/>
    <property type="project" value="UniProtKB-UniRule"/>
</dbReference>
<dbReference type="GO" id="GO:0009089">
    <property type="term" value="P:lysine biosynthetic process via diaminopimelate"/>
    <property type="evidence" value="ECO:0007669"/>
    <property type="project" value="UniProtKB-UniRule"/>
</dbReference>
<dbReference type="CDD" id="cd02274">
    <property type="entry name" value="DHDPR_N"/>
    <property type="match status" value="1"/>
</dbReference>
<dbReference type="FunFam" id="3.30.360.10:FF:000004">
    <property type="entry name" value="4-hydroxy-tetrahydrodipicolinate reductase"/>
    <property type="match status" value="1"/>
</dbReference>
<dbReference type="Gene3D" id="3.30.360.10">
    <property type="entry name" value="Dihydrodipicolinate Reductase, domain 2"/>
    <property type="match status" value="1"/>
</dbReference>
<dbReference type="Gene3D" id="3.40.50.720">
    <property type="entry name" value="NAD(P)-binding Rossmann-like Domain"/>
    <property type="match status" value="1"/>
</dbReference>
<dbReference type="HAMAP" id="MF_00102">
    <property type="entry name" value="DapB"/>
    <property type="match status" value="1"/>
</dbReference>
<dbReference type="InterPro" id="IPR022663">
    <property type="entry name" value="DapB_C"/>
</dbReference>
<dbReference type="InterPro" id="IPR000846">
    <property type="entry name" value="DapB_N"/>
</dbReference>
<dbReference type="InterPro" id="IPR022664">
    <property type="entry name" value="DapB_N_CS"/>
</dbReference>
<dbReference type="InterPro" id="IPR023940">
    <property type="entry name" value="DHDPR_bac"/>
</dbReference>
<dbReference type="InterPro" id="IPR036291">
    <property type="entry name" value="NAD(P)-bd_dom_sf"/>
</dbReference>
<dbReference type="NCBIfam" id="TIGR00036">
    <property type="entry name" value="dapB"/>
    <property type="match status" value="1"/>
</dbReference>
<dbReference type="PANTHER" id="PTHR20836:SF0">
    <property type="entry name" value="4-HYDROXY-TETRAHYDRODIPICOLINATE REDUCTASE 1, CHLOROPLASTIC-RELATED"/>
    <property type="match status" value="1"/>
</dbReference>
<dbReference type="PANTHER" id="PTHR20836">
    <property type="entry name" value="DIHYDRODIPICOLINATE REDUCTASE"/>
    <property type="match status" value="1"/>
</dbReference>
<dbReference type="Pfam" id="PF05173">
    <property type="entry name" value="DapB_C"/>
    <property type="match status" value="1"/>
</dbReference>
<dbReference type="Pfam" id="PF01113">
    <property type="entry name" value="DapB_N"/>
    <property type="match status" value="1"/>
</dbReference>
<dbReference type="PIRSF" id="PIRSF000161">
    <property type="entry name" value="DHPR"/>
    <property type="match status" value="1"/>
</dbReference>
<dbReference type="SUPFAM" id="SSF55347">
    <property type="entry name" value="Glyceraldehyde-3-phosphate dehydrogenase-like, C-terminal domain"/>
    <property type="match status" value="1"/>
</dbReference>
<dbReference type="SUPFAM" id="SSF51735">
    <property type="entry name" value="NAD(P)-binding Rossmann-fold domains"/>
    <property type="match status" value="1"/>
</dbReference>
<dbReference type="PROSITE" id="PS01298">
    <property type="entry name" value="DAPB"/>
    <property type="match status" value="1"/>
</dbReference>
<gene>
    <name evidence="1" type="primary">dapB</name>
    <name type="ordered locus">Ccur92_02100</name>
    <name type="ORF">CCV52592_0841</name>
</gene>
<name>DAPB_CAMC5</name>
<feature type="chain" id="PRO_1000008550" description="4-hydroxy-tetrahydrodipicolinate reductase">
    <location>
        <begin position="1"/>
        <end position="254"/>
    </location>
</feature>
<feature type="active site" description="Proton donor/acceptor" evidence="1">
    <location>
        <position position="143"/>
    </location>
</feature>
<feature type="active site" description="Proton donor" evidence="1">
    <location>
        <position position="147"/>
    </location>
</feature>
<feature type="binding site" evidence="1">
    <location>
        <begin position="8"/>
        <end position="13"/>
    </location>
    <ligand>
        <name>NAD(+)</name>
        <dbReference type="ChEBI" id="CHEBI:57540"/>
    </ligand>
</feature>
<feature type="binding site" evidence="1">
    <location>
        <begin position="87"/>
        <end position="89"/>
    </location>
    <ligand>
        <name>NAD(+)</name>
        <dbReference type="ChEBI" id="CHEBI:57540"/>
    </ligand>
</feature>
<feature type="binding site" evidence="1">
    <location>
        <begin position="111"/>
        <end position="114"/>
    </location>
    <ligand>
        <name>NAD(+)</name>
        <dbReference type="ChEBI" id="CHEBI:57540"/>
    </ligand>
</feature>
<feature type="binding site" evidence="1">
    <location>
        <position position="144"/>
    </location>
    <ligand>
        <name>(S)-2,3,4,5-tetrahydrodipicolinate</name>
        <dbReference type="ChEBI" id="CHEBI:16845"/>
    </ligand>
</feature>
<feature type="binding site" evidence="1">
    <location>
        <begin position="153"/>
        <end position="154"/>
    </location>
    <ligand>
        <name>(S)-2,3,4,5-tetrahydrodipicolinate</name>
        <dbReference type="ChEBI" id="CHEBI:16845"/>
    </ligand>
</feature>